<evidence type="ECO:0000269" key="1">
    <source>
    </source>
</evidence>
<evidence type="ECO:0000303" key="2">
    <source>
    </source>
</evidence>
<evidence type="ECO:0000312" key="3">
    <source>
        <dbReference type="EMBL" id="AFN50432.1"/>
    </source>
</evidence>
<evidence type="ECO:0000312" key="4">
    <source>
        <dbReference type="EMBL" id="CCP45259.1"/>
    </source>
</evidence>
<evidence type="ECO:0000312" key="5">
    <source>
        <dbReference type="EMBL" id="KBJ30793.1"/>
    </source>
</evidence>
<evidence type="ECO:0007829" key="6">
    <source>
        <dbReference type="PDB" id="4NXI"/>
    </source>
</evidence>
<evidence type="ECO:0007829" key="7">
    <source>
        <dbReference type="PDB" id="4ZIL"/>
    </source>
</evidence>
<gene>
    <name evidence="4" type="ordered locus">Rv2466c</name>
    <name evidence="3" type="ordered locus">RVBD_2466c</name>
    <name evidence="5" type="ORF">P425_02568</name>
</gene>
<comment type="function">
    <text evidence="1">In vitro, the reduced form of Rv2466c catalyzes the reduction and activation of TP053, which is a thienopyrimidine derivative drug that can kill both replicating and non-replicating M.tuberculosis.</text>
</comment>
<comment type="biophysicochemical properties">
    <kinetics>
        <text evidence="1">kcat is 0.0403 sec(-1).</text>
    </kinetics>
</comment>
<comment type="subunit">
    <text evidence="1">Homodimer.</text>
</comment>
<comment type="subcellular location">
    <subcellularLocation>
        <location evidence="1">Cytoplasm</location>
    </subcellularLocation>
</comment>
<name>TRLR_MYCTU</name>
<reference key="1">
    <citation type="journal article" date="1998" name="Nature">
        <title>Deciphering the biology of Mycobacterium tuberculosis from the complete genome sequence.</title>
        <authorList>
            <person name="Cole S.T."/>
            <person name="Brosch R."/>
            <person name="Parkhill J."/>
            <person name="Garnier T."/>
            <person name="Churcher C.M."/>
            <person name="Harris D.E."/>
            <person name="Gordon S.V."/>
            <person name="Eiglmeier K."/>
            <person name="Gas S."/>
            <person name="Barry C.E. III"/>
            <person name="Tekaia F."/>
            <person name="Badcock K."/>
            <person name="Basham D."/>
            <person name="Brown D."/>
            <person name="Chillingworth T."/>
            <person name="Connor R."/>
            <person name="Davies R.M."/>
            <person name="Devlin K."/>
            <person name="Feltwell T."/>
            <person name="Gentles S."/>
            <person name="Hamlin N."/>
            <person name="Holroyd S."/>
            <person name="Hornsby T."/>
            <person name="Jagels K."/>
            <person name="Krogh A."/>
            <person name="McLean J."/>
            <person name="Moule S."/>
            <person name="Murphy L.D."/>
            <person name="Oliver S."/>
            <person name="Osborne J."/>
            <person name="Quail M.A."/>
            <person name="Rajandream M.A."/>
            <person name="Rogers J."/>
            <person name="Rutter S."/>
            <person name="Seeger K."/>
            <person name="Skelton S."/>
            <person name="Squares S."/>
            <person name="Squares R."/>
            <person name="Sulston J.E."/>
            <person name="Taylor K."/>
            <person name="Whitehead S."/>
            <person name="Barrell B.G."/>
        </authorList>
    </citation>
    <scope>NUCLEOTIDE SEQUENCE [LARGE SCALE GENOMIC DNA]</scope>
    <source>
        <strain>ATCC 25618 / H37Rv</strain>
    </source>
</reference>
<reference key="2">
    <citation type="submission" date="2013-11" db="EMBL/GenBank/DDBJ databases">
        <title>The genome sequence of Mycobacterium tuberculosis H37Rv.</title>
        <authorList>
            <consortium name="The Broad Institute Genome Sequencing Platform"/>
            <person name="Galagan J."/>
            <person name="Kreiswirth B."/>
            <person name="Dobos K."/>
            <person name="Fortune S."/>
            <person name="Fitzgerald M."/>
            <person name="Young S.K."/>
            <person name="Zeng Q."/>
            <person name="Gargeya S."/>
            <person name="Abouelleil A."/>
            <person name="Alvarado L."/>
            <person name="Berlin A.M."/>
            <person name="Chapman S.B."/>
            <person name="Gainer-Dewar J."/>
            <person name="Goldberg J."/>
            <person name="Gnerre S."/>
            <person name="Griggs A."/>
            <person name="Gujja S."/>
            <person name="Hansen M."/>
            <person name="Howarth C."/>
            <person name="Imamovic A."/>
            <person name="Larimer J."/>
            <person name="McCowan C."/>
            <person name="Murphy C."/>
            <person name="Pearson M."/>
            <person name="Poon T."/>
            <person name="Priest M."/>
            <person name="Roberts A."/>
            <person name="Saif S."/>
            <person name="Shea T."/>
            <person name="Sykes S."/>
            <person name="Wortman J."/>
            <person name="Nusbaum C."/>
            <person name="Birren B."/>
        </authorList>
    </citation>
    <scope>NUCLEOTIDE SEQUENCE [LARGE SCALE GENOMIC DNA]</scope>
    <source>
        <strain>ATCC 25618 / H37Rv</strain>
    </source>
</reference>
<reference key="3">
    <citation type="submission" date="2014-04" db="EMBL/GenBank/DDBJ databases">
        <title>The genome sequence of Mycobacterium tuberculosis H37Rv.</title>
        <authorList>
            <consortium name="The Broad Institute Genomics Platform"/>
            <consortium name="The Broad Institute Genome Sequencing Center for Infectious Disease"/>
            <person name="Earl A.M."/>
            <person name="Kreiswirth B."/>
            <person name="Gomez J."/>
            <person name="Victor T."/>
            <person name="Desjardins C."/>
            <person name="Abeel T."/>
            <person name="Young S."/>
            <person name="Zeng Q."/>
            <person name="Gargeya S."/>
            <person name="Abouelleil A."/>
            <person name="Alvarado L."/>
            <person name="Chapman S.B."/>
            <person name="Gainer-Dewar J."/>
            <person name="Goldberg J."/>
            <person name="Griggs A."/>
            <person name="Gujja S."/>
            <person name="Hansen M."/>
            <person name="Howarth C."/>
            <person name="Imamovic A."/>
            <person name="Larimer J."/>
            <person name="Murphy C."/>
            <person name="Naylor J."/>
            <person name="Pearson M."/>
            <person name="Poon T.W."/>
            <person name="Priest M."/>
            <person name="Roberts A."/>
            <person name="Saif S."/>
            <person name="Shea T."/>
            <person name="Sykes S."/>
            <person name="Wortman J."/>
            <person name="Nusbaum C."/>
            <person name="Birren B."/>
        </authorList>
    </citation>
    <scope>NUCLEOTIDE SEQUENCE [LARGE SCALE GENOMIC DNA]</scope>
    <source>
        <strain>ATCC 25618 / H37Rv</strain>
    </source>
</reference>
<reference key="4">
    <citation type="journal article" date="2011" name="Mol. Cell. Proteomics">
        <title>Proteogenomic analysis of Mycobacterium tuberculosis by high resolution mass spectrometry.</title>
        <authorList>
            <person name="Kelkar D.S."/>
            <person name="Kumar D."/>
            <person name="Kumar P."/>
            <person name="Balakrishnan L."/>
            <person name="Muthusamy B."/>
            <person name="Yadav A.K."/>
            <person name="Shrivastava P."/>
            <person name="Marimuthu A."/>
            <person name="Anand S."/>
            <person name="Sundaram H."/>
            <person name="Kingsbury R."/>
            <person name="Harsha H.C."/>
            <person name="Nair B."/>
            <person name="Prasad T.S."/>
            <person name="Chauhan D.S."/>
            <person name="Katoch K."/>
            <person name="Katoch V.M."/>
            <person name="Kumar P."/>
            <person name="Chaerkady R."/>
            <person name="Ramachandran S."/>
            <person name="Dash D."/>
            <person name="Pandey A."/>
        </authorList>
    </citation>
    <scope>IDENTIFICATION BY MASS SPECTROMETRY [LARGE SCALE ANALYSIS]</scope>
    <source>
        <strain>ATCC 25618 / H37Rv</strain>
    </source>
</reference>
<reference key="5">
    <citation type="journal article" date="2014" name="ACS Chem. Biol.">
        <title>Rv2466c mediates the activation of TP053 to kill replicating and non-replicating Mycobacterium tuberculosis.</title>
        <authorList>
            <person name="Albesa-Jove D."/>
            <person name="Chiarelli L.R."/>
            <person name="Makarov V."/>
            <person name="Pasca M.R."/>
            <person name="Urresti S."/>
            <person name="Mori G."/>
            <person name="Salina E."/>
            <person name="Vocat A."/>
            <person name="Comino N."/>
            <person name="Mohorko E."/>
            <person name="Ryabova S."/>
            <person name="Pfieiffer B."/>
            <person name="Lopes Ribeiro A.L."/>
            <person name="Rodrigo-Unzueta A."/>
            <person name="Tersa M."/>
            <person name="Zanoni G."/>
            <person name="Buroni S."/>
            <person name="Altmann K.H."/>
            <person name="Hartkoorn R.C."/>
            <person name="Glockshuber R."/>
            <person name="Cole S.T."/>
            <person name="Riccardi G."/>
            <person name="Guerin M.E."/>
        </authorList>
    </citation>
    <scope>X-RAY CRYSTALLOGRAPHY (1.70 ANGSTROMS)</scope>
    <scope>FUNCTION</scope>
    <scope>BIOPHYSICOCHEMICAL PROPERTIES</scope>
    <scope>SUBUNIT</scope>
    <scope>SUBCELLULAR LOCATION</scope>
    <scope>MUTAGENESIS OF TRP-28</scope>
    <source>
        <strain>H37Rv</strain>
    </source>
</reference>
<sequence length="207" mass="23035">MLEKAPQKSVADFWFDPLCPWCWITSRWILEVAKVRDIEVNFHVMSLAILNENRDDLPEQYREGMARAWGPVRVAIAAEQAHGAKVLDPLYTAMGNRIHNQGNHELDEVITQSLADAGLPAELAKAATSDAYDNALRKSHHAGMDAVGEDVGTPTIHVNGVAFFGPVLSKIPRGEEAGKLWDASVTFASYPHFFELKRTRTEPPQFD</sequence>
<accession>O53193</accession>
<accession>F2GHK3</accession>
<accession>I6Y9D7</accession>
<accession>L0TBA9</accession>
<proteinExistence type="evidence at protein level"/>
<protein>
    <recommendedName>
        <fullName evidence="2">Thioredoxin-like reductase Rv2466c</fullName>
    </recommendedName>
</protein>
<feature type="chain" id="PRO_0000433023" description="Thioredoxin-like reductase Rv2466c">
    <location>
        <begin position="1"/>
        <end position="207"/>
    </location>
</feature>
<feature type="mutagenesis site" description="Lack of activity. Confers resistance to TP053." evidence="1">
    <original>W</original>
    <variation>S</variation>
    <location>
        <position position="28"/>
    </location>
</feature>
<feature type="strand" evidence="7">
    <location>
        <begin position="9"/>
        <end position="15"/>
    </location>
</feature>
<feature type="helix" evidence="7">
    <location>
        <begin position="20"/>
        <end position="35"/>
    </location>
</feature>
<feature type="strand" evidence="7">
    <location>
        <begin position="38"/>
        <end position="44"/>
    </location>
</feature>
<feature type="helix" evidence="7">
    <location>
        <begin position="47"/>
        <end position="52"/>
    </location>
</feature>
<feature type="helix" evidence="7">
    <location>
        <begin position="59"/>
        <end position="65"/>
    </location>
</feature>
<feature type="helix" evidence="7">
    <location>
        <begin position="70"/>
        <end position="82"/>
    </location>
</feature>
<feature type="helix" evidence="7">
    <location>
        <begin position="84"/>
        <end position="86"/>
    </location>
</feature>
<feature type="helix" evidence="7">
    <location>
        <begin position="87"/>
        <end position="98"/>
    </location>
</feature>
<feature type="helix" evidence="7">
    <location>
        <begin position="106"/>
        <end position="116"/>
    </location>
</feature>
<feature type="helix" evidence="7">
    <location>
        <begin position="121"/>
        <end position="128"/>
    </location>
</feature>
<feature type="helix" evidence="7">
    <location>
        <begin position="133"/>
        <end position="144"/>
    </location>
</feature>
<feature type="strand" evidence="6">
    <location>
        <begin position="147"/>
        <end position="149"/>
    </location>
</feature>
<feature type="strand" evidence="7">
    <location>
        <begin position="155"/>
        <end position="158"/>
    </location>
</feature>
<feature type="strand" evidence="7">
    <location>
        <begin position="161"/>
        <end position="170"/>
    </location>
</feature>
<feature type="helix" evidence="7">
    <location>
        <begin position="174"/>
        <end position="188"/>
    </location>
</feature>
<feature type="strand" evidence="7">
    <location>
        <begin position="193"/>
        <end position="197"/>
    </location>
</feature>
<organism>
    <name type="scientific">Mycobacterium tuberculosis (strain ATCC 25618 / H37Rv)</name>
    <dbReference type="NCBI Taxonomy" id="83332"/>
    <lineage>
        <taxon>Bacteria</taxon>
        <taxon>Bacillati</taxon>
        <taxon>Actinomycetota</taxon>
        <taxon>Actinomycetes</taxon>
        <taxon>Mycobacteriales</taxon>
        <taxon>Mycobacteriaceae</taxon>
        <taxon>Mycobacterium</taxon>
        <taxon>Mycobacterium tuberculosis complex</taxon>
    </lineage>
</organism>
<keyword id="KW-0002">3D-structure</keyword>
<keyword id="KW-0963">Cytoplasm</keyword>
<keyword id="KW-0560">Oxidoreductase</keyword>
<keyword id="KW-1185">Reference proteome</keyword>
<dbReference type="EMBL" id="AL123456">
    <property type="protein sequence ID" value="CCP45259.1"/>
    <property type="molecule type" value="Genomic_DNA"/>
</dbReference>
<dbReference type="EMBL" id="CP003248">
    <property type="protein sequence ID" value="AFN50432.1"/>
    <property type="molecule type" value="Genomic_DNA"/>
</dbReference>
<dbReference type="EMBL" id="JLDD01000032">
    <property type="protein sequence ID" value="KBJ30793.1"/>
    <property type="molecule type" value="Genomic_DNA"/>
</dbReference>
<dbReference type="RefSeq" id="NP_216982.1">
    <property type="nucleotide sequence ID" value="NC_000962.3"/>
</dbReference>
<dbReference type="RefSeq" id="WP_003412664.1">
    <property type="nucleotide sequence ID" value="NZ_NVQJ01000024.1"/>
</dbReference>
<dbReference type="PDB" id="4NXI">
    <property type="method" value="X-ray"/>
    <property type="resolution" value="1.70 A"/>
    <property type="chains" value="A/B=1-207"/>
</dbReference>
<dbReference type="PDB" id="4ZIL">
    <property type="method" value="X-ray"/>
    <property type="resolution" value="1.51 A"/>
    <property type="chains" value="A/B=1-207"/>
</dbReference>
<dbReference type="PDB" id="5XUR">
    <property type="method" value="X-ray"/>
    <property type="resolution" value="2.00 A"/>
    <property type="chains" value="A/B/C/D=1-207"/>
</dbReference>
<dbReference type="PDBsum" id="4NXI"/>
<dbReference type="PDBsum" id="4ZIL"/>
<dbReference type="PDBsum" id="5XUR"/>
<dbReference type="SMR" id="O53193"/>
<dbReference type="STRING" id="83332.Rv2466c"/>
<dbReference type="PaxDb" id="83332-Rv2466c"/>
<dbReference type="DNASU" id="888214"/>
<dbReference type="GeneID" id="888214"/>
<dbReference type="KEGG" id="mtu:Rv2466c"/>
<dbReference type="KEGG" id="mtv:RVBD_2466c"/>
<dbReference type="PATRIC" id="fig|83332.111.peg.2760"/>
<dbReference type="TubercuList" id="Rv2466c"/>
<dbReference type="eggNOG" id="COG2761">
    <property type="taxonomic scope" value="Bacteria"/>
</dbReference>
<dbReference type="HOGENOM" id="CLU_087602_1_0_11"/>
<dbReference type="InParanoid" id="O53193"/>
<dbReference type="OrthoDB" id="4125991at2"/>
<dbReference type="PhylomeDB" id="O53193"/>
<dbReference type="BRENDA" id="1.20.4.3">
    <property type="organism ID" value="3445"/>
</dbReference>
<dbReference type="EvolutionaryTrace" id="O53193"/>
<dbReference type="Proteomes" id="UP000001584">
    <property type="component" value="Chromosome"/>
</dbReference>
<dbReference type="GO" id="GO:0005737">
    <property type="term" value="C:cytoplasm"/>
    <property type="evidence" value="ECO:0007669"/>
    <property type="project" value="UniProtKB-SubCell"/>
</dbReference>
<dbReference type="GO" id="GO:0009274">
    <property type="term" value="C:peptidoglycan-based cell wall"/>
    <property type="evidence" value="ECO:0007005"/>
    <property type="project" value="MTBBASE"/>
</dbReference>
<dbReference type="GO" id="GO:0016491">
    <property type="term" value="F:oxidoreductase activity"/>
    <property type="evidence" value="ECO:0007669"/>
    <property type="project" value="UniProtKB-KW"/>
</dbReference>
<dbReference type="FunFam" id="3.40.30.10:FF:000414">
    <property type="entry name" value="Thioredoxin-like reductase Rv2466c"/>
    <property type="match status" value="1"/>
</dbReference>
<dbReference type="Gene3D" id="3.40.30.10">
    <property type="entry name" value="Glutaredoxin"/>
    <property type="match status" value="1"/>
</dbReference>
<dbReference type="InterPro" id="IPR053977">
    <property type="entry name" value="Rv2466c-like"/>
</dbReference>
<dbReference type="InterPro" id="IPR036249">
    <property type="entry name" value="Thioredoxin-like_sf"/>
</dbReference>
<dbReference type="Pfam" id="PF22234">
    <property type="entry name" value="Rv2466c-like"/>
    <property type="match status" value="1"/>
</dbReference>
<dbReference type="SUPFAM" id="SSF52833">
    <property type="entry name" value="Thioredoxin-like"/>
    <property type="match status" value="1"/>
</dbReference>